<gene>
    <name evidence="1" type="primary">ribA</name>
    <name type="ordered locus">VC_1263</name>
</gene>
<organism>
    <name type="scientific">Vibrio cholerae serotype O1 (strain ATCC 39315 / El Tor Inaba N16961)</name>
    <dbReference type="NCBI Taxonomy" id="243277"/>
    <lineage>
        <taxon>Bacteria</taxon>
        <taxon>Pseudomonadati</taxon>
        <taxon>Pseudomonadota</taxon>
        <taxon>Gammaproteobacteria</taxon>
        <taxon>Vibrionales</taxon>
        <taxon>Vibrionaceae</taxon>
        <taxon>Vibrio</taxon>
    </lineage>
</organism>
<accession>Q9KSJ3</accession>
<protein>
    <recommendedName>
        <fullName evidence="1">GTP cyclohydrolase-2</fullName>
        <ecNumber evidence="1">3.5.4.25</ecNumber>
    </recommendedName>
    <alternativeName>
        <fullName evidence="1">GTP cyclohydrolase II</fullName>
    </alternativeName>
</protein>
<name>RIBA_VIBCH</name>
<feature type="chain" id="PRO_0000151778" description="GTP cyclohydrolase-2">
    <location>
        <begin position="1"/>
        <end position="198"/>
    </location>
</feature>
<feature type="active site" description="Proton acceptor" evidence="1">
    <location>
        <position position="128"/>
    </location>
</feature>
<feature type="active site" description="Nucleophile" evidence="1">
    <location>
        <position position="130"/>
    </location>
</feature>
<feature type="binding site" evidence="1">
    <location>
        <begin position="52"/>
        <end position="56"/>
    </location>
    <ligand>
        <name>GTP</name>
        <dbReference type="ChEBI" id="CHEBI:37565"/>
    </ligand>
</feature>
<feature type="binding site" evidence="1">
    <location>
        <position position="57"/>
    </location>
    <ligand>
        <name>Zn(2+)</name>
        <dbReference type="ChEBI" id="CHEBI:29105"/>
        <note>catalytic</note>
    </ligand>
</feature>
<feature type="binding site" evidence="1">
    <location>
        <position position="68"/>
    </location>
    <ligand>
        <name>Zn(2+)</name>
        <dbReference type="ChEBI" id="CHEBI:29105"/>
        <note>catalytic</note>
    </ligand>
</feature>
<feature type="binding site" evidence="1">
    <location>
        <position position="70"/>
    </location>
    <ligand>
        <name>Zn(2+)</name>
        <dbReference type="ChEBI" id="CHEBI:29105"/>
        <note>catalytic</note>
    </ligand>
</feature>
<feature type="binding site" evidence="1">
    <location>
        <position position="73"/>
    </location>
    <ligand>
        <name>GTP</name>
        <dbReference type="ChEBI" id="CHEBI:37565"/>
    </ligand>
</feature>
<feature type="binding site" evidence="1">
    <location>
        <begin position="94"/>
        <end position="96"/>
    </location>
    <ligand>
        <name>GTP</name>
        <dbReference type="ChEBI" id="CHEBI:37565"/>
    </ligand>
</feature>
<feature type="binding site" evidence="1">
    <location>
        <position position="116"/>
    </location>
    <ligand>
        <name>GTP</name>
        <dbReference type="ChEBI" id="CHEBI:37565"/>
    </ligand>
</feature>
<feature type="binding site" evidence="1">
    <location>
        <position position="151"/>
    </location>
    <ligand>
        <name>GTP</name>
        <dbReference type="ChEBI" id="CHEBI:37565"/>
    </ligand>
</feature>
<feature type="binding site" evidence="1">
    <location>
        <position position="156"/>
    </location>
    <ligand>
        <name>GTP</name>
        <dbReference type="ChEBI" id="CHEBI:37565"/>
    </ligand>
</feature>
<evidence type="ECO:0000255" key="1">
    <source>
        <dbReference type="HAMAP-Rule" id="MF_00179"/>
    </source>
</evidence>
<evidence type="ECO:0000305" key="2"/>
<sequence length="198" mass="22158">MAEVRARVDFKVGAKSNIDAEILSFHGLQSDKEHVAVIFKSADTTQEAPLVRMHSECLTGDVFHSSRCDCGEQLEETITRMGQSGGIILYLRQEGRGIGLYNKIDAYRLQSQGMNTYEANNHLGFGDDLRDFTEAAQMLQALGVKKIRLVTNNPKKIRELQEHGIEIVEVVHTSAHIKDGNENYLKAKVSHGKHQLKL</sequence>
<proteinExistence type="inferred from homology"/>
<keyword id="KW-0342">GTP-binding</keyword>
<keyword id="KW-0378">Hydrolase</keyword>
<keyword id="KW-0479">Metal-binding</keyword>
<keyword id="KW-0547">Nucleotide-binding</keyword>
<keyword id="KW-1185">Reference proteome</keyword>
<keyword id="KW-0686">Riboflavin biosynthesis</keyword>
<keyword id="KW-0862">Zinc</keyword>
<comment type="function">
    <text evidence="1">Catalyzes the conversion of GTP to 2,5-diamino-6-ribosylamino-4(3H)-pyrimidinone 5'-phosphate (DARP), formate and pyrophosphate.</text>
</comment>
<comment type="catalytic activity">
    <reaction evidence="1">
        <text>GTP + 4 H2O = 2,5-diamino-6-hydroxy-4-(5-phosphoribosylamino)-pyrimidine + formate + 2 phosphate + 3 H(+)</text>
        <dbReference type="Rhea" id="RHEA:23704"/>
        <dbReference type="ChEBI" id="CHEBI:15377"/>
        <dbReference type="ChEBI" id="CHEBI:15378"/>
        <dbReference type="ChEBI" id="CHEBI:15740"/>
        <dbReference type="ChEBI" id="CHEBI:37565"/>
        <dbReference type="ChEBI" id="CHEBI:43474"/>
        <dbReference type="ChEBI" id="CHEBI:58614"/>
        <dbReference type="EC" id="3.5.4.25"/>
    </reaction>
</comment>
<comment type="cofactor">
    <cofactor evidence="1">
        <name>Zn(2+)</name>
        <dbReference type="ChEBI" id="CHEBI:29105"/>
    </cofactor>
    <text evidence="1">Binds 1 zinc ion per subunit.</text>
</comment>
<comment type="pathway">
    <text evidence="1">Cofactor biosynthesis; riboflavin biosynthesis; 5-amino-6-(D-ribitylamino)uracil from GTP: step 1/4.</text>
</comment>
<comment type="similarity">
    <text evidence="1">Belongs to the GTP cyclohydrolase II family.</text>
</comment>
<comment type="sequence caution" evidence="2">
    <conflict type="erroneous initiation">
        <sequence resource="EMBL-CDS" id="AAF94422"/>
    </conflict>
</comment>
<reference key="1">
    <citation type="journal article" date="2000" name="Nature">
        <title>DNA sequence of both chromosomes of the cholera pathogen Vibrio cholerae.</title>
        <authorList>
            <person name="Heidelberg J.F."/>
            <person name="Eisen J.A."/>
            <person name="Nelson W.C."/>
            <person name="Clayton R.A."/>
            <person name="Gwinn M.L."/>
            <person name="Dodson R.J."/>
            <person name="Haft D.H."/>
            <person name="Hickey E.K."/>
            <person name="Peterson J.D."/>
            <person name="Umayam L.A."/>
            <person name="Gill S.R."/>
            <person name="Nelson K.E."/>
            <person name="Read T.D."/>
            <person name="Tettelin H."/>
            <person name="Richardson D.L."/>
            <person name="Ermolaeva M.D."/>
            <person name="Vamathevan J.J."/>
            <person name="Bass S."/>
            <person name="Qin H."/>
            <person name="Dragoi I."/>
            <person name="Sellers P."/>
            <person name="McDonald L.A."/>
            <person name="Utterback T.R."/>
            <person name="Fleischmann R.D."/>
            <person name="Nierman W.C."/>
            <person name="White O."/>
            <person name="Salzberg S.L."/>
            <person name="Smith H.O."/>
            <person name="Colwell R.R."/>
            <person name="Mekalanos J.J."/>
            <person name="Venter J.C."/>
            <person name="Fraser C.M."/>
        </authorList>
    </citation>
    <scope>NUCLEOTIDE SEQUENCE [LARGE SCALE GENOMIC DNA]</scope>
    <source>
        <strain>ATCC 39315 / El Tor Inaba N16961</strain>
    </source>
</reference>
<dbReference type="EC" id="3.5.4.25" evidence="1"/>
<dbReference type="EMBL" id="AE003852">
    <property type="protein sequence ID" value="AAF94422.1"/>
    <property type="status" value="ALT_INIT"/>
    <property type="molecule type" value="Genomic_DNA"/>
</dbReference>
<dbReference type="PIR" id="B82222">
    <property type="entry name" value="B82222"/>
</dbReference>
<dbReference type="RefSeq" id="NP_230908.1">
    <property type="nucleotide sequence ID" value="NC_002505.1"/>
</dbReference>
<dbReference type="SMR" id="Q9KSJ3"/>
<dbReference type="STRING" id="243277.VC_1263"/>
<dbReference type="DNASU" id="2614717"/>
<dbReference type="EnsemblBacteria" id="AAF94422">
    <property type="protein sequence ID" value="AAF94422"/>
    <property type="gene ID" value="VC_1263"/>
</dbReference>
<dbReference type="KEGG" id="vch:VC_1263"/>
<dbReference type="PATRIC" id="fig|243277.26.peg.1202"/>
<dbReference type="eggNOG" id="COG0807">
    <property type="taxonomic scope" value="Bacteria"/>
</dbReference>
<dbReference type="HOGENOM" id="CLU_020273_2_1_6"/>
<dbReference type="UniPathway" id="UPA00275">
    <property type="reaction ID" value="UER00400"/>
</dbReference>
<dbReference type="Proteomes" id="UP000000584">
    <property type="component" value="Chromosome 1"/>
</dbReference>
<dbReference type="GO" id="GO:0005829">
    <property type="term" value="C:cytosol"/>
    <property type="evidence" value="ECO:0000318"/>
    <property type="project" value="GO_Central"/>
</dbReference>
<dbReference type="GO" id="GO:0005525">
    <property type="term" value="F:GTP binding"/>
    <property type="evidence" value="ECO:0007669"/>
    <property type="project" value="UniProtKB-KW"/>
</dbReference>
<dbReference type="GO" id="GO:0003935">
    <property type="term" value="F:GTP cyclohydrolase II activity"/>
    <property type="evidence" value="ECO:0000318"/>
    <property type="project" value="GO_Central"/>
</dbReference>
<dbReference type="GO" id="GO:0008270">
    <property type="term" value="F:zinc ion binding"/>
    <property type="evidence" value="ECO:0007669"/>
    <property type="project" value="UniProtKB-UniRule"/>
</dbReference>
<dbReference type="GO" id="GO:0009231">
    <property type="term" value="P:riboflavin biosynthetic process"/>
    <property type="evidence" value="ECO:0000318"/>
    <property type="project" value="GO_Central"/>
</dbReference>
<dbReference type="CDD" id="cd00641">
    <property type="entry name" value="GTP_cyclohydro2"/>
    <property type="match status" value="1"/>
</dbReference>
<dbReference type="FunFam" id="3.40.50.10990:FF:000001">
    <property type="entry name" value="Riboflavin biosynthesis protein RibBA"/>
    <property type="match status" value="1"/>
</dbReference>
<dbReference type="Gene3D" id="3.40.50.10990">
    <property type="entry name" value="GTP cyclohydrolase II"/>
    <property type="match status" value="1"/>
</dbReference>
<dbReference type="HAMAP" id="MF_00179">
    <property type="entry name" value="RibA"/>
    <property type="match status" value="1"/>
</dbReference>
<dbReference type="InterPro" id="IPR032677">
    <property type="entry name" value="GTP_cyclohydro_II"/>
</dbReference>
<dbReference type="InterPro" id="IPR000926">
    <property type="entry name" value="RibA"/>
</dbReference>
<dbReference type="InterPro" id="IPR036144">
    <property type="entry name" value="RibA-like_sf"/>
</dbReference>
<dbReference type="NCBIfam" id="NF001591">
    <property type="entry name" value="PRK00393.1"/>
    <property type="match status" value="1"/>
</dbReference>
<dbReference type="PANTHER" id="PTHR21327:SF18">
    <property type="entry name" value="3,4-DIHYDROXY-2-BUTANONE 4-PHOSPHATE SYNTHASE"/>
    <property type="match status" value="1"/>
</dbReference>
<dbReference type="PANTHER" id="PTHR21327">
    <property type="entry name" value="GTP CYCLOHYDROLASE II-RELATED"/>
    <property type="match status" value="1"/>
</dbReference>
<dbReference type="Pfam" id="PF00925">
    <property type="entry name" value="GTP_cyclohydro2"/>
    <property type="match status" value="1"/>
</dbReference>
<dbReference type="SUPFAM" id="SSF142695">
    <property type="entry name" value="RibA-like"/>
    <property type="match status" value="1"/>
</dbReference>